<evidence type="ECO:0000255" key="1">
    <source>
        <dbReference type="HAMAP-Rule" id="MF_00054"/>
    </source>
</evidence>
<evidence type="ECO:0000256" key="2">
    <source>
        <dbReference type="SAM" id="MobiDB-lite"/>
    </source>
</evidence>
<comment type="function">
    <text evidence="1">Catalyzes the GTP-dependent ribosomal translocation step during translation elongation. During this step, the ribosome changes from the pre-translocational (PRE) to the post-translocational (POST) state as the newly formed A-site-bound peptidyl-tRNA and P-site-bound deacylated tRNA move to the P and E sites, respectively. Catalyzes the coordinated movement of the two tRNA molecules, the mRNA and conformational changes in the ribosome.</text>
</comment>
<comment type="subcellular location">
    <subcellularLocation>
        <location evidence="1">Cytoplasm</location>
    </subcellularLocation>
</comment>
<comment type="similarity">
    <text evidence="1">Belongs to the TRAFAC class translation factor GTPase superfamily. Classic translation factor GTPase family. EF-G/EF-2 subfamily.</text>
</comment>
<name>EFG_XANCB</name>
<organism>
    <name type="scientific">Xanthomonas campestris pv. campestris (strain B100)</name>
    <dbReference type="NCBI Taxonomy" id="509169"/>
    <lineage>
        <taxon>Bacteria</taxon>
        <taxon>Pseudomonadati</taxon>
        <taxon>Pseudomonadota</taxon>
        <taxon>Gammaproteobacteria</taxon>
        <taxon>Lysobacterales</taxon>
        <taxon>Lysobacteraceae</taxon>
        <taxon>Xanthomonas</taxon>
    </lineage>
</organism>
<feature type="chain" id="PRO_1000091780" description="Elongation factor G">
    <location>
        <begin position="1"/>
        <end position="705"/>
    </location>
</feature>
<feature type="domain" description="tr-type G">
    <location>
        <begin position="8"/>
        <end position="290"/>
    </location>
</feature>
<feature type="region of interest" description="Disordered" evidence="2">
    <location>
        <begin position="290"/>
        <end position="309"/>
    </location>
</feature>
<feature type="binding site" evidence="1">
    <location>
        <begin position="17"/>
        <end position="24"/>
    </location>
    <ligand>
        <name>GTP</name>
        <dbReference type="ChEBI" id="CHEBI:37565"/>
    </ligand>
</feature>
<feature type="binding site" evidence="1">
    <location>
        <begin position="88"/>
        <end position="92"/>
    </location>
    <ligand>
        <name>GTP</name>
        <dbReference type="ChEBI" id="CHEBI:37565"/>
    </ligand>
</feature>
<feature type="binding site" evidence="1">
    <location>
        <begin position="142"/>
        <end position="145"/>
    </location>
    <ligand>
        <name>GTP</name>
        <dbReference type="ChEBI" id="CHEBI:37565"/>
    </ligand>
</feature>
<accession>B0RU85</accession>
<keyword id="KW-0963">Cytoplasm</keyword>
<keyword id="KW-0251">Elongation factor</keyword>
<keyword id="KW-0342">GTP-binding</keyword>
<keyword id="KW-0547">Nucleotide-binding</keyword>
<keyword id="KW-0648">Protein biosynthesis</keyword>
<protein>
    <recommendedName>
        <fullName evidence="1">Elongation factor G</fullName>
        <shortName evidence="1">EF-G</shortName>
    </recommendedName>
</protein>
<reference key="1">
    <citation type="journal article" date="2008" name="J. Biotechnol.">
        <title>The genome of Xanthomonas campestris pv. campestris B100 and its use for the reconstruction of metabolic pathways involved in xanthan biosynthesis.</title>
        <authorList>
            <person name="Vorhoelter F.-J."/>
            <person name="Schneiker S."/>
            <person name="Goesmann A."/>
            <person name="Krause L."/>
            <person name="Bekel T."/>
            <person name="Kaiser O."/>
            <person name="Linke B."/>
            <person name="Patschkowski T."/>
            <person name="Rueckert C."/>
            <person name="Schmid J."/>
            <person name="Sidhu V.K."/>
            <person name="Sieber V."/>
            <person name="Tauch A."/>
            <person name="Watt S.A."/>
            <person name="Weisshaar B."/>
            <person name="Becker A."/>
            <person name="Niehaus K."/>
            <person name="Puehler A."/>
        </authorList>
    </citation>
    <scope>NUCLEOTIDE SEQUENCE [LARGE SCALE GENOMIC DNA]</scope>
    <source>
        <strain>B100</strain>
    </source>
</reference>
<dbReference type="EMBL" id="AM920689">
    <property type="protein sequence ID" value="CAP52827.1"/>
    <property type="molecule type" value="Genomic_DNA"/>
</dbReference>
<dbReference type="SMR" id="B0RU85"/>
<dbReference type="KEGG" id="xca:xcc-b100_3462"/>
<dbReference type="HOGENOM" id="CLU_002794_4_1_6"/>
<dbReference type="Proteomes" id="UP000001188">
    <property type="component" value="Chromosome"/>
</dbReference>
<dbReference type="GO" id="GO:0005737">
    <property type="term" value="C:cytoplasm"/>
    <property type="evidence" value="ECO:0007669"/>
    <property type="project" value="UniProtKB-SubCell"/>
</dbReference>
<dbReference type="GO" id="GO:0005525">
    <property type="term" value="F:GTP binding"/>
    <property type="evidence" value="ECO:0007669"/>
    <property type="project" value="UniProtKB-UniRule"/>
</dbReference>
<dbReference type="GO" id="GO:0003924">
    <property type="term" value="F:GTPase activity"/>
    <property type="evidence" value="ECO:0007669"/>
    <property type="project" value="InterPro"/>
</dbReference>
<dbReference type="GO" id="GO:0097216">
    <property type="term" value="F:guanosine tetraphosphate binding"/>
    <property type="evidence" value="ECO:0007669"/>
    <property type="project" value="UniProtKB-ARBA"/>
</dbReference>
<dbReference type="GO" id="GO:0003746">
    <property type="term" value="F:translation elongation factor activity"/>
    <property type="evidence" value="ECO:0007669"/>
    <property type="project" value="UniProtKB-UniRule"/>
</dbReference>
<dbReference type="GO" id="GO:0032790">
    <property type="term" value="P:ribosome disassembly"/>
    <property type="evidence" value="ECO:0007669"/>
    <property type="project" value="TreeGrafter"/>
</dbReference>
<dbReference type="CDD" id="cd01886">
    <property type="entry name" value="EF-G"/>
    <property type="match status" value="1"/>
</dbReference>
<dbReference type="CDD" id="cd16262">
    <property type="entry name" value="EFG_III"/>
    <property type="match status" value="1"/>
</dbReference>
<dbReference type="CDD" id="cd01434">
    <property type="entry name" value="EFG_mtEFG1_IV"/>
    <property type="match status" value="1"/>
</dbReference>
<dbReference type="CDD" id="cd03713">
    <property type="entry name" value="EFG_mtEFG_C"/>
    <property type="match status" value="1"/>
</dbReference>
<dbReference type="CDD" id="cd04088">
    <property type="entry name" value="EFG_mtEFG_II"/>
    <property type="match status" value="1"/>
</dbReference>
<dbReference type="FunFam" id="2.40.30.10:FF:000006">
    <property type="entry name" value="Elongation factor G"/>
    <property type="match status" value="1"/>
</dbReference>
<dbReference type="FunFam" id="3.30.230.10:FF:000003">
    <property type="entry name" value="Elongation factor G"/>
    <property type="match status" value="1"/>
</dbReference>
<dbReference type="FunFam" id="3.30.70.240:FF:000001">
    <property type="entry name" value="Elongation factor G"/>
    <property type="match status" value="1"/>
</dbReference>
<dbReference type="FunFam" id="3.30.70.870:FF:000001">
    <property type="entry name" value="Elongation factor G"/>
    <property type="match status" value="1"/>
</dbReference>
<dbReference type="FunFam" id="3.40.50.300:FF:000029">
    <property type="entry name" value="Elongation factor G"/>
    <property type="match status" value="1"/>
</dbReference>
<dbReference type="Gene3D" id="3.30.230.10">
    <property type="match status" value="1"/>
</dbReference>
<dbReference type="Gene3D" id="3.30.70.240">
    <property type="match status" value="1"/>
</dbReference>
<dbReference type="Gene3D" id="3.30.70.870">
    <property type="entry name" value="Elongation Factor G (Translational Gtpase), domain 3"/>
    <property type="match status" value="1"/>
</dbReference>
<dbReference type="Gene3D" id="3.40.50.300">
    <property type="entry name" value="P-loop containing nucleotide triphosphate hydrolases"/>
    <property type="match status" value="1"/>
</dbReference>
<dbReference type="Gene3D" id="2.40.30.10">
    <property type="entry name" value="Translation factors"/>
    <property type="match status" value="1"/>
</dbReference>
<dbReference type="HAMAP" id="MF_00054_B">
    <property type="entry name" value="EF_G_EF_2_B"/>
    <property type="match status" value="1"/>
</dbReference>
<dbReference type="InterPro" id="IPR041095">
    <property type="entry name" value="EFG_II"/>
</dbReference>
<dbReference type="InterPro" id="IPR009022">
    <property type="entry name" value="EFG_III"/>
</dbReference>
<dbReference type="InterPro" id="IPR035647">
    <property type="entry name" value="EFG_III/V"/>
</dbReference>
<dbReference type="InterPro" id="IPR047872">
    <property type="entry name" value="EFG_IV"/>
</dbReference>
<dbReference type="InterPro" id="IPR035649">
    <property type="entry name" value="EFG_V"/>
</dbReference>
<dbReference type="InterPro" id="IPR000640">
    <property type="entry name" value="EFG_V-like"/>
</dbReference>
<dbReference type="InterPro" id="IPR004161">
    <property type="entry name" value="EFTu-like_2"/>
</dbReference>
<dbReference type="InterPro" id="IPR031157">
    <property type="entry name" value="G_TR_CS"/>
</dbReference>
<dbReference type="InterPro" id="IPR027417">
    <property type="entry name" value="P-loop_NTPase"/>
</dbReference>
<dbReference type="InterPro" id="IPR020568">
    <property type="entry name" value="Ribosomal_Su5_D2-typ_SF"/>
</dbReference>
<dbReference type="InterPro" id="IPR014721">
    <property type="entry name" value="Ribsml_uS5_D2-typ_fold_subgr"/>
</dbReference>
<dbReference type="InterPro" id="IPR005225">
    <property type="entry name" value="Small_GTP-bd"/>
</dbReference>
<dbReference type="InterPro" id="IPR000795">
    <property type="entry name" value="T_Tr_GTP-bd_dom"/>
</dbReference>
<dbReference type="InterPro" id="IPR009000">
    <property type="entry name" value="Transl_B-barrel_sf"/>
</dbReference>
<dbReference type="InterPro" id="IPR004540">
    <property type="entry name" value="Transl_elong_EFG/EF2"/>
</dbReference>
<dbReference type="InterPro" id="IPR005517">
    <property type="entry name" value="Transl_elong_EFG/EF2_IV"/>
</dbReference>
<dbReference type="NCBIfam" id="TIGR00484">
    <property type="entry name" value="EF-G"/>
    <property type="match status" value="1"/>
</dbReference>
<dbReference type="NCBIfam" id="NF009381">
    <property type="entry name" value="PRK12740.1-5"/>
    <property type="match status" value="1"/>
</dbReference>
<dbReference type="NCBIfam" id="TIGR00231">
    <property type="entry name" value="small_GTP"/>
    <property type="match status" value="1"/>
</dbReference>
<dbReference type="PANTHER" id="PTHR43261:SF1">
    <property type="entry name" value="RIBOSOME-RELEASING FACTOR 2, MITOCHONDRIAL"/>
    <property type="match status" value="1"/>
</dbReference>
<dbReference type="PANTHER" id="PTHR43261">
    <property type="entry name" value="TRANSLATION ELONGATION FACTOR G-RELATED"/>
    <property type="match status" value="1"/>
</dbReference>
<dbReference type="Pfam" id="PF00679">
    <property type="entry name" value="EFG_C"/>
    <property type="match status" value="1"/>
</dbReference>
<dbReference type="Pfam" id="PF14492">
    <property type="entry name" value="EFG_III"/>
    <property type="match status" value="1"/>
</dbReference>
<dbReference type="Pfam" id="PF03764">
    <property type="entry name" value="EFG_IV"/>
    <property type="match status" value="1"/>
</dbReference>
<dbReference type="Pfam" id="PF00009">
    <property type="entry name" value="GTP_EFTU"/>
    <property type="match status" value="1"/>
</dbReference>
<dbReference type="Pfam" id="PF03144">
    <property type="entry name" value="GTP_EFTU_D2"/>
    <property type="match status" value="1"/>
</dbReference>
<dbReference type="PRINTS" id="PR00315">
    <property type="entry name" value="ELONGATNFCT"/>
</dbReference>
<dbReference type="SMART" id="SM00838">
    <property type="entry name" value="EFG_C"/>
    <property type="match status" value="1"/>
</dbReference>
<dbReference type="SMART" id="SM00889">
    <property type="entry name" value="EFG_IV"/>
    <property type="match status" value="1"/>
</dbReference>
<dbReference type="SUPFAM" id="SSF54980">
    <property type="entry name" value="EF-G C-terminal domain-like"/>
    <property type="match status" value="2"/>
</dbReference>
<dbReference type="SUPFAM" id="SSF52540">
    <property type="entry name" value="P-loop containing nucleoside triphosphate hydrolases"/>
    <property type="match status" value="1"/>
</dbReference>
<dbReference type="SUPFAM" id="SSF54211">
    <property type="entry name" value="Ribosomal protein S5 domain 2-like"/>
    <property type="match status" value="1"/>
</dbReference>
<dbReference type="SUPFAM" id="SSF50447">
    <property type="entry name" value="Translation proteins"/>
    <property type="match status" value="1"/>
</dbReference>
<dbReference type="PROSITE" id="PS00301">
    <property type="entry name" value="G_TR_1"/>
    <property type="match status" value="1"/>
</dbReference>
<dbReference type="PROSITE" id="PS51722">
    <property type="entry name" value="G_TR_2"/>
    <property type="match status" value="1"/>
</dbReference>
<sequence length="705" mass="77621">MARTTPIERYRNFGIMAHIDAGKTTTSERILFYTGVSHKIGEVHDGAAVMDWMEQEQERGITITSAATTAFWTGMDKSMPQHRFNIIDTPGHVDFTIEVERSLRVLDGAVFVLCAVGGVQPQSETVWRQANKYSVPRMAFVNKMDRTGANFDKVVEQLKARLGAYAVPMQVPIGAEDGFEGVVDLLKMKAIHWDTASQGTTFEYRDIPADLVDVATEARSFMVEAAAEASEALMDKYLNDGDLSEDEILSGLRERTLKVEIVPVFCGSAFKNKGVQAMLDGVVHLLPSPADRPPVQGIDENEKEDTRDATDTAPFSALAFKIMTDPFVGSLTFFRVYSGTLNSGDQVYNPVKSKKERVGRILQMHSNNREEIKEVRAGDIAAAVGLKDVTTGDTLCAQDKIITLERMVFPEPVISMAVEPKTKSDQEKMGMALGRLAQEDPSFRVKTDEESGQTIISGMGELHLDIIVDRMRREFNVEANVGKPQVAYRETIRKSDVKSDYKHAKQSGGKGQYGHVVIELSPMTEEDRKNDSVKDDFLFINDITGGIIPKEFIPSVEKGLRETITSGPIAGFPVVGVKVKLVFGSYHDVDSSEMAFKLAASMAFKQGFAKASPVLLEPIMKVEIVSPEDYLGDVMGDVSRRRGVLQGQDDSPSGKIINAMIPLGEMFGYATSLRSMSQGRATFSMEFDHYEEAPANIADAVTKKG</sequence>
<proteinExistence type="inferred from homology"/>
<gene>
    <name evidence="1" type="primary">fusA</name>
    <name type="ordered locus">xcc-b100_3462</name>
</gene>